<protein>
    <recommendedName>
        <fullName evidence="3">Large ribosomal subunit protein bL28m</fullName>
    </recommendedName>
    <alternativeName>
        <fullName>39S ribosomal protein L28, mitochondrial</fullName>
        <shortName>L28mt</shortName>
        <shortName>MRP-L28</shortName>
    </alternativeName>
</protein>
<evidence type="ECO:0000250" key="1">
    <source>
        <dbReference type="UniProtKB" id="Q13084"/>
    </source>
</evidence>
<evidence type="ECO:0000255" key="2"/>
<evidence type="ECO:0000305" key="3"/>
<dbReference type="EMBL" id="AE014134">
    <property type="protein sequence ID" value="AAF52188.1"/>
    <property type="molecule type" value="Genomic_DNA"/>
</dbReference>
<dbReference type="EMBL" id="AY075494">
    <property type="protein sequence ID" value="AAL68304.1"/>
    <property type="molecule type" value="mRNA"/>
</dbReference>
<dbReference type="RefSeq" id="NP_001260063.1">
    <property type="nucleotide sequence ID" value="NM_001273134.1"/>
</dbReference>
<dbReference type="RefSeq" id="NP_608887.1">
    <property type="nucleotide sequence ID" value="NM_135043.4"/>
</dbReference>
<dbReference type="SMR" id="Q9VMX0"/>
<dbReference type="BioGRID" id="59899">
    <property type="interactions" value="3"/>
</dbReference>
<dbReference type="FunCoup" id="Q9VMX0">
    <property type="interactions" value="596"/>
</dbReference>
<dbReference type="IntAct" id="Q9VMX0">
    <property type="interactions" value="1"/>
</dbReference>
<dbReference type="STRING" id="7227.FBpp0303669"/>
<dbReference type="PaxDb" id="7227-FBpp0303669"/>
<dbReference type="DNASU" id="33715"/>
<dbReference type="EnsemblMetazoa" id="FBtr0078996">
    <property type="protein sequence ID" value="FBpp0078635"/>
    <property type="gene ID" value="FBgn0031660"/>
</dbReference>
<dbReference type="EnsemblMetazoa" id="FBtr0331227">
    <property type="protein sequence ID" value="FBpp0303669"/>
    <property type="gene ID" value="FBgn0031660"/>
</dbReference>
<dbReference type="GeneID" id="33715"/>
<dbReference type="KEGG" id="dme:Dmel_CG3782"/>
<dbReference type="AGR" id="FB:FBgn0031660"/>
<dbReference type="CTD" id="10573"/>
<dbReference type="FlyBase" id="FBgn0031660">
    <property type="gene designation" value="mRpL28"/>
</dbReference>
<dbReference type="VEuPathDB" id="VectorBase:FBgn0031660"/>
<dbReference type="eggNOG" id="KOG3279">
    <property type="taxonomic scope" value="Eukaryota"/>
</dbReference>
<dbReference type="GeneTree" id="ENSGT00390000017359"/>
<dbReference type="HOGENOM" id="CLU_078055_0_0_1"/>
<dbReference type="InParanoid" id="Q9VMX0"/>
<dbReference type="OMA" id="KMSNRLK"/>
<dbReference type="OrthoDB" id="361870at2759"/>
<dbReference type="PhylomeDB" id="Q9VMX0"/>
<dbReference type="Reactome" id="R-DME-5389840">
    <property type="pathway name" value="Mitochondrial translation elongation"/>
</dbReference>
<dbReference type="Reactome" id="R-DME-5419276">
    <property type="pathway name" value="Mitochondrial translation termination"/>
</dbReference>
<dbReference type="SignaLink" id="Q9VMX0"/>
<dbReference type="BioGRID-ORCS" id="33715">
    <property type="hits" value="1 hit in 1 CRISPR screen"/>
</dbReference>
<dbReference type="GenomeRNAi" id="33715"/>
<dbReference type="PRO" id="PR:Q9VMX0"/>
<dbReference type="Proteomes" id="UP000000803">
    <property type="component" value="Chromosome 2L"/>
</dbReference>
<dbReference type="Bgee" id="FBgn0031660">
    <property type="expression patterns" value="Expressed in adult hindgut (Drosophila) and 168 other cell types or tissues"/>
</dbReference>
<dbReference type="ExpressionAtlas" id="Q9VMX0">
    <property type="expression patterns" value="baseline and differential"/>
</dbReference>
<dbReference type="GO" id="GO:0005762">
    <property type="term" value="C:mitochondrial large ribosomal subunit"/>
    <property type="evidence" value="ECO:0000250"/>
    <property type="project" value="UniProtKB"/>
</dbReference>
<dbReference type="GO" id="GO:0003735">
    <property type="term" value="F:structural constituent of ribosome"/>
    <property type="evidence" value="ECO:0000250"/>
    <property type="project" value="FlyBase"/>
</dbReference>
<dbReference type="GO" id="GO:0032543">
    <property type="term" value="P:mitochondrial translation"/>
    <property type="evidence" value="ECO:0000304"/>
    <property type="project" value="FlyBase"/>
</dbReference>
<dbReference type="InterPro" id="IPR026569">
    <property type="entry name" value="Ribosomal_bL28"/>
</dbReference>
<dbReference type="InterPro" id="IPR034704">
    <property type="entry name" value="Ribosomal_bL28/bL31-like_sf"/>
</dbReference>
<dbReference type="PANTHER" id="PTHR13528">
    <property type="entry name" value="39S RIBOSOMAL PROTEIN L28, MITOCHONDRIAL"/>
    <property type="match status" value="1"/>
</dbReference>
<dbReference type="PANTHER" id="PTHR13528:SF2">
    <property type="entry name" value="LARGE RIBOSOMAL SUBUNIT PROTEIN BL28M"/>
    <property type="match status" value="1"/>
</dbReference>
<dbReference type="SUPFAM" id="SSF143800">
    <property type="entry name" value="L28p-like"/>
    <property type="match status" value="1"/>
</dbReference>
<name>RM28_DROME</name>
<sequence length="302" mass="34950">MAHATPQGVKLLNGWKRPGRFDKGLGAQLPEAYRKFWREWKLTTPAAVHYIPKEQQWERDEVTHAIKPVQNIPLPLIDTPESHRGIWGGEAVIKGFQKREQTKRRVPHFWVPNLRRSVVHSHVLDCYMSVVVTERTLEQIHECHGFDHYLLKNRACDLRSALALKLKREVLQALQNGVPALADEPERQQEVLKEYRRYLEPYTPEEIDWYGHTYLEAIRKLQKQLREAEKVVPHKLEFRGKLIEQLRQAGISEAGKLEKPDALAAESSVEHKDSDIEALTKLESSPSSSWLSKINPFGKKET</sequence>
<gene>
    <name type="primary">mRpL28</name>
    <name type="ORF">CG3782</name>
</gene>
<keyword id="KW-0496">Mitochondrion</keyword>
<keyword id="KW-1185">Reference proteome</keyword>
<keyword id="KW-0687">Ribonucleoprotein</keyword>
<keyword id="KW-0689">Ribosomal protein</keyword>
<keyword id="KW-0809">Transit peptide</keyword>
<accession>Q9VMX0</accession>
<accession>Q8SXZ1</accession>
<reference key="1">
    <citation type="journal article" date="2000" name="Science">
        <title>The genome sequence of Drosophila melanogaster.</title>
        <authorList>
            <person name="Adams M.D."/>
            <person name="Celniker S.E."/>
            <person name="Holt R.A."/>
            <person name="Evans C.A."/>
            <person name="Gocayne J.D."/>
            <person name="Amanatides P.G."/>
            <person name="Scherer S.E."/>
            <person name="Li P.W."/>
            <person name="Hoskins R.A."/>
            <person name="Galle R.F."/>
            <person name="George R.A."/>
            <person name="Lewis S.E."/>
            <person name="Richards S."/>
            <person name="Ashburner M."/>
            <person name="Henderson S.N."/>
            <person name="Sutton G.G."/>
            <person name="Wortman J.R."/>
            <person name="Yandell M.D."/>
            <person name="Zhang Q."/>
            <person name="Chen L.X."/>
            <person name="Brandon R.C."/>
            <person name="Rogers Y.-H.C."/>
            <person name="Blazej R.G."/>
            <person name="Champe M."/>
            <person name="Pfeiffer B.D."/>
            <person name="Wan K.H."/>
            <person name="Doyle C."/>
            <person name="Baxter E.G."/>
            <person name="Helt G."/>
            <person name="Nelson C.R."/>
            <person name="Miklos G.L.G."/>
            <person name="Abril J.F."/>
            <person name="Agbayani A."/>
            <person name="An H.-J."/>
            <person name="Andrews-Pfannkoch C."/>
            <person name="Baldwin D."/>
            <person name="Ballew R.M."/>
            <person name="Basu A."/>
            <person name="Baxendale J."/>
            <person name="Bayraktaroglu L."/>
            <person name="Beasley E.M."/>
            <person name="Beeson K.Y."/>
            <person name="Benos P.V."/>
            <person name="Berman B.P."/>
            <person name="Bhandari D."/>
            <person name="Bolshakov S."/>
            <person name="Borkova D."/>
            <person name="Botchan M.R."/>
            <person name="Bouck J."/>
            <person name="Brokstein P."/>
            <person name="Brottier P."/>
            <person name="Burtis K.C."/>
            <person name="Busam D.A."/>
            <person name="Butler H."/>
            <person name="Cadieu E."/>
            <person name="Center A."/>
            <person name="Chandra I."/>
            <person name="Cherry J.M."/>
            <person name="Cawley S."/>
            <person name="Dahlke C."/>
            <person name="Davenport L.B."/>
            <person name="Davies P."/>
            <person name="de Pablos B."/>
            <person name="Delcher A."/>
            <person name="Deng Z."/>
            <person name="Mays A.D."/>
            <person name="Dew I."/>
            <person name="Dietz S.M."/>
            <person name="Dodson K."/>
            <person name="Doup L.E."/>
            <person name="Downes M."/>
            <person name="Dugan-Rocha S."/>
            <person name="Dunkov B.C."/>
            <person name="Dunn P."/>
            <person name="Durbin K.J."/>
            <person name="Evangelista C.C."/>
            <person name="Ferraz C."/>
            <person name="Ferriera S."/>
            <person name="Fleischmann W."/>
            <person name="Fosler C."/>
            <person name="Gabrielian A.E."/>
            <person name="Garg N.S."/>
            <person name="Gelbart W.M."/>
            <person name="Glasser K."/>
            <person name="Glodek A."/>
            <person name="Gong F."/>
            <person name="Gorrell J.H."/>
            <person name="Gu Z."/>
            <person name="Guan P."/>
            <person name="Harris M."/>
            <person name="Harris N.L."/>
            <person name="Harvey D.A."/>
            <person name="Heiman T.J."/>
            <person name="Hernandez J.R."/>
            <person name="Houck J."/>
            <person name="Hostin D."/>
            <person name="Houston K.A."/>
            <person name="Howland T.J."/>
            <person name="Wei M.-H."/>
            <person name="Ibegwam C."/>
            <person name="Jalali M."/>
            <person name="Kalush F."/>
            <person name="Karpen G.H."/>
            <person name="Ke Z."/>
            <person name="Kennison J.A."/>
            <person name="Ketchum K.A."/>
            <person name="Kimmel B.E."/>
            <person name="Kodira C.D."/>
            <person name="Kraft C.L."/>
            <person name="Kravitz S."/>
            <person name="Kulp D."/>
            <person name="Lai Z."/>
            <person name="Lasko P."/>
            <person name="Lei Y."/>
            <person name="Levitsky A.A."/>
            <person name="Li J.H."/>
            <person name="Li Z."/>
            <person name="Liang Y."/>
            <person name="Lin X."/>
            <person name="Liu X."/>
            <person name="Mattei B."/>
            <person name="McIntosh T.C."/>
            <person name="McLeod M.P."/>
            <person name="McPherson D."/>
            <person name="Merkulov G."/>
            <person name="Milshina N.V."/>
            <person name="Mobarry C."/>
            <person name="Morris J."/>
            <person name="Moshrefi A."/>
            <person name="Mount S.M."/>
            <person name="Moy M."/>
            <person name="Murphy B."/>
            <person name="Murphy L."/>
            <person name="Muzny D.M."/>
            <person name="Nelson D.L."/>
            <person name="Nelson D.R."/>
            <person name="Nelson K.A."/>
            <person name="Nixon K."/>
            <person name="Nusskern D.R."/>
            <person name="Pacleb J.M."/>
            <person name="Palazzolo M."/>
            <person name="Pittman G.S."/>
            <person name="Pan S."/>
            <person name="Pollard J."/>
            <person name="Puri V."/>
            <person name="Reese M.G."/>
            <person name="Reinert K."/>
            <person name="Remington K."/>
            <person name="Saunders R.D.C."/>
            <person name="Scheeler F."/>
            <person name="Shen H."/>
            <person name="Shue B.C."/>
            <person name="Siden-Kiamos I."/>
            <person name="Simpson M."/>
            <person name="Skupski M.P."/>
            <person name="Smith T.J."/>
            <person name="Spier E."/>
            <person name="Spradling A.C."/>
            <person name="Stapleton M."/>
            <person name="Strong R."/>
            <person name="Sun E."/>
            <person name="Svirskas R."/>
            <person name="Tector C."/>
            <person name="Turner R."/>
            <person name="Venter E."/>
            <person name="Wang A.H."/>
            <person name="Wang X."/>
            <person name="Wang Z.-Y."/>
            <person name="Wassarman D.A."/>
            <person name="Weinstock G.M."/>
            <person name="Weissenbach J."/>
            <person name="Williams S.M."/>
            <person name="Woodage T."/>
            <person name="Worley K.C."/>
            <person name="Wu D."/>
            <person name="Yang S."/>
            <person name="Yao Q.A."/>
            <person name="Ye J."/>
            <person name="Yeh R.-F."/>
            <person name="Zaveri J.S."/>
            <person name="Zhan M."/>
            <person name="Zhang G."/>
            <person name="Zhao Q."/>
            <person name="Zheng L."/>
            <person name="Zheng X.H."/>
            <person name="Zhong F.N."/>
            <person name="Zhong W."/>
            <person name="Zhou X."/>
            <person name="Zhu S.C."/>
            <person name="Zhu X."/>
            <person name="Smith H.O."/>
            <person name="Gibbs R.A."/>
            <person name="Myers E.W."/>
            <person name="Rubin G.M."/>
            <person name="Venter J.C."/>
        </authorList>
    </citation>
    <scope>NUCLEOTIDE SEQUENCE [LARGE SCALE GENOMIC DNA]</scope>
    <source>
        <strain>Berkeley</strain>
    </source>
</reference>
<reference key="2">
    <citation type="journal article" date="2002" name="Genome Biol.">
        <title>Annotation of the Drosophila melanogaster euchromatic genome: a systematic review.</title>
        <authorList>
            <person name="Misra S."/>
            <person name="Crosby M.A."/>
            <person name="Mungall C.J."/>
            <person name="Matthews B.B."/>
            <person name="Campbell K.S."/>
            <person name="Hradecky P."/>
            <person name="Huang Y."/>
            <person name="Kaminker J.S."/>
            <person name="Millburn G.H."/>
            <person name="Prochnik S.E."/>
            <person name="Smith C.D."/>
            <person name="Tupy J.L."/>
            <person name="Whitfield E.J."/>
            <person name="Bayraktaroglu L."/>
            <person name="Berman B.P."/>
            <person name="Bettencourt B.R."/>
            <person name="Celniker S.E."/>
            <person name="de Grey A.D.N.J."/>
            <person name="Drysdale R.A."/>
            <person name="Harris N.L."/>
            <person name="Richter J."/>
            <person name="Russo S."/>
            <person name="Schroeder A.J."/>
            <person name="Shu S.Q."/>
            <person name="Stapleton M."/>
            <person name="Yamada C."/>
            <person name="Ashburner M."/>
            <person name="Gelbart W.M."/>
            <person name="Rubin G.M."/>
            <person name="Lewis S.E."/>
        </authorList>
    </citation>
    <scope>GENOME REANNOTATION</scope>
    <source>
        <strain>Berkeley</strain>
    </source>
</reference>
<reference key="3">
    <citation type="journal article" date="2002" name="Genome Biol.">
        <title>A Drosophila full-length cDNA resource.</title>
        <authorList>
            <person name="Stapleton M."/>
            <person name="Carlson J.W."/>
            <person name="Brokstein P."/>
            <person name="Yu C."/>
            <person name="Champe M."/>
            <person name="George R.A."/>
            <person name="Guarin H."/>
            <person name="Kronmiller B."/>
            <person name="Pacleb J.M."/>
            <person name="Park S."/>
            <person name="Wan K.H."/>
            <person name="Rubin G.M."/>
            <person name="Celniker S.E."/>
        </authorList>
    </citation>
    <scope>NUCLEOTIDE SEQUENCE [LARGE SCALE MRNA]</scope>
    <source>
        <strain>Berkeley</strain>
        <tissue>Embryo</tissue>
    </source>
</reference>
<comment type="subunit">
    <text evidence="1">Component of the mitochondrial ribosome large subunit (39S) which comprises a 16S rRNA and about 50 distinct proteins.</text>
</comment>
<comment type="subcellular location">
    <subcellularLocation>
        <location evidence="1">Mitochondrion</location>
    </subcellularLocation>
</comment>
<comment type="similarity">
    <text evidence="3">Belongs to the bacterial ribosomal protein bL28 family.</text>
</comment>
<organism>
    <name type="scientific">Drosophila melanogaster</name>
    <name type="common">Fruit fly</name>
    <dbReference type="NCBI Taxonomy" id="7227"/>
    <lineage>
        <taxon>Eukaryota</taxon>
        <taxon>Metazoa</taxon>
        <taxon>Ecdysozoa</taxon>
        <taxon>Arthropoda</taxon>
        <taxon>Hexapoda</taxon>
        <taxon>Insecta</taxon>
        <taxon>Pterygota</taxon>
        <taxon>Neoptera</taxon>
        <taxon>Endopterygota</taxon>
        <taxon>Diptera</taxon>
        <taxon>Brachycera</taxon>
        <taxon>Muscomorpha</taxon>
        <taxon>Ephydroidea</taxon>
        <taxon>Drosophilidae</taxon>
        <taxon>Drosophila</taxon>
        <taxon>Sophophora</taxon>
    </lineage>
</organism>
<proteinExistence type="evidence at transcript level"/>
<feature type="transit peptide" description="Mitochondrion" evidence="2">
    <location>
        <begin position="1"/>
        <end status="unknown"/>
    </location>
</feature>
<feature type="chain" id="PRO_0000030508" description="Large ribosomal subunit protein bL28m">
    <location>
        <begin status="unknown"/>
        <end position="302"/>
    </location>
</feature>
<feature type="sequence conflict" description="In Ref. 3; AAL68304." evidence="3" ref="3">
    <original>IW</original>
    <variation>MG</variation>
    <location>
        <begin position="86"/>
        <end position="87"/>
    </location>
</feature>